<name>PEN3M_PENST</name>
<organism>
    <name type="scientific">Penaeus setiferus</name>
    <name type="common">Atlantic white shrimp</name>
    <name type="synonym">Litopenaeus setiferus</name>
    <dbReference type="NCBI Taxonomy" id="64468"/>
    <lineage>
        <taxon>Eukaryota</taxon>
        <taxon>Metazoa</taxon>
        <taxon>Ecdysozoa</taxon>
        <taxon>Arthropoda</taxon>
        <taxon>Crustacea</taxon>
        <taxon>Multicrustacea</taxon>
        <taxon>Malacostraca</taxon>
        <taxon>Eumalacostraca</taxon>
        <taxon>Eucarida</taxon>
        <taxon>Decapoda</taxon>
        <taxon>Dendrobranchiata</taxon>
        <taxon>Penaeoidea</taxon>
        <taxon>Penaeidae</taxon>
        <taxon>Penaeus</taxon>
    </lineage>
</organism>
<comment type="function">
    <text evidence="1">Antibacterial and antifungal activity. Presents chitin-binding activity (By similarity).</text>
</comment>
<comment type="subcellular location">
    <subcellularLocation>
        <location>Cytoplasmic granule</location>
    </subcellularLocation>
    <text>Cytoplasmic granules of hemocytes and to a lesser extent in small granules of hemocytes.</text>
</comment>
<comment type="similarity">
    <text evidence="3">Belongs to the penaeidin family.</text>
</comment>
<sequence length="75" mass="8163">MRLVVCLVFLASFALVCQGQGCKGPYTRPILRPYVRPVVSYNACTLSCRGITTTQARSCCTRLGRCCHVAKGYSG</sequence>
<feature type="signal peptide" evidence="2">
    <location>
        <begin position="1"/>
        <end position="19"/>
    </location>
</feature>
<feature type="chain" id="PRO_0000023518" description="Penaeidin-3m">
    <location>
        <begin position="20"/>
        <end position="74"/>
    </location>
</feature>
<feature type="modified residue" description="Pyrrolidone carboxylic acid" evidence="1">
    <location>
        <position position="20"/>
    </location>
</feature>
<feature type="modified residue" description="Serine amide" evidence="1">
    <location>
        <position position="74"/>
    </location>
</feature>
<feature type="disulfide bond" evidence="1">
    <location>
        <begin position="44"/>
        <end position="59"/>
    </location>
</feature>
<feature type="disulfide bond" evidence="1">
    <location>
        <begin position="48"/>
        <end position="66"/>
    </location>
</feature>
<feature type="disulfide bond" evidence="1">
    <location>
        <begin position="60"/>
        <end position="67"/>
    </location>
</feature>
<reference key="1">
    <citation type="journal article" date="2002" name="Immunogenetics">
        <title>Diversity of the penaeidin antimicrobial peptides in two shrimp species.</title>
        <authorList>
            <person name="Cuthbertson B.J."/>
            <person name="Shepard E.F."/>
            <person name="Chapman R.W."/>
            <person name="Gross P.S."/>
        </authorList>
    </citation>
    <scope>NUCLEOTIDE SEQUENCE [MRNA]</scope>
    <source>
        <tissue>Hemocyte</tissue>
    </source>
</reference>
<keyword id="KW-0027">Amidation</keyword>
<keyword id="KW-0044">Antibiotic</keyword>
<keyword id="KW-0929">Antimicrobial</keyword>
<keyword id="KW-0147">Chitin-binding</keyword>
<keyword id="KW-1015">Disulfide bond</keyword>
<keyword id="KW-0295">Fungicide</keyword>
<keyword id="KW-0873">Pyrrolidone carboxylic acid</keyword>
<keyword id="KW-0732">Signal</keyword>
<accession>Q962B1</accession>
<proteinExistence type="inferred from homology"/>
<dbReference type="EMBL" id="AY039203">
    <property type="protein sequence ID" value="AAK83451.1"/>
    <property type="molecule type" value="mRNA"/>
</dbReference>
<dbReference type="GO" id="GO:0005737">
    <property type="term" value="C:cytoplasm"/>
    <property type="evidence" value="ECO:0007669"/>
    <property type="project" value="InterPro"/>
</dbReference>
<dbReference type="GO" id="GO:0008061">
    <property type="term" value="F:chitin binding"/>
    <property type="evidence" value="ECO:0007669"/>
    <property type="project" value="UniProtKB-KW"/>
</dbReference>
<dbReference type="GO" id="GO:0042742">
    <property type="term" value="P:defense response to bacterium"/>
    <property type="evidence" value="ECO:0007669"/>
    <property type="project" value="UniProtKB-KW"/>
</dbReference>
<dbReference type="GO" id="GO:0050832">
    <property type="term" value="P:defense response to fungus"/>
    <property type="evidence" value="ECO:0007669"/>
    <property type="project" value="UniProtKB-KW"/>
</dbReference>
<dbReference type="GO" id="GO:0031640">
    <property type="term" value="P:killing of cells of another organism"/>
    <property type="evidence" value="ECO:0007669"/>
    <property type="project" value="UniProtKB-KW"/>
</dbReference>
<dbReference type="InterPro" id="IPR009226">
    <property type="entry name" value="Penaeidin"/>
</dbReference>
<dbReference type="Pfam" id="PF05927">
    <property type="entry name" value="Penaeidin"/>
    <property type="match status" value="1"/>
</dbReference>
<evidence type="ECO:0000250" key="1"/>
<evidence type="ECO:0000255" key="2"/>
<evidence type="ECO:0000305" key="3"/>
<protein>
    <recommendedName>
        <fullName>Penaeidin-3m</fullName>
        <shortName>Pen-3m</shortName>
    </recommendedName>
</protein>